<dbReference type="EC" id="3.2.1.4"/>
<dbReference type="EMBL" id="AL732344">
    <property type="protein sequence ID" value="CAH68191.1"/>
    <property type="molecule type" value="Genomic_DNA"/>
</dbReference>
<dbReference type="EMBL" id="AL732351">
    <property type="protein sequence ID" value="CAJ86099.1"/>
    <property type="molecule type" value="Genomic_DNA"/>
</dbReference>
<dbReference type="EMBL" id="CM000129">
    <property type="protein sequence ID" value="EAY96028.1"/>
    <property type="molecule type" value="Genomic_DNA"/>
</dbReference>
<dbReference type="SMR" id="A2XYW8"/>
<dbReference type="STRING" id="39946.A2XYW8"/>
<dbReference type="CAZy" id="CBM49">
    <property type="family name" value="Carbohydrate-Binding Module Family 49"/>
</dbReference>
<dbReference type="CAZy" id="GH9">
    <property type="family name" value="Glycoside Hydrolase Family 9"/>
</dbReference>
<dbReference type="GlyCosmos" id="A2XYW8">
    <property type="glycosylation" value="1 site, No reported glycans"/>
</dbReference>
<dbReference type="HOGENOM" id="CLU_008926_1_4_1"/>
<dbReference type="Proteomes" id="UP000007015">
    <property type="component" value="Chromosome 4"/>
</dbReference>
<dbReference type="GO" id="GO:0005576">
    <property type="term" value="C:extracellular region"/>
    <property type="evidence" value="ECO:0007669"/>
    <property type="project" value="UniProtKB-SubCell"/>
</dbReference>
<dbReference type="GO" id="GO:0030246">
    <property type="term" value="F:carbohydrate binding"/>
    <property type="evidence" value="ECO:0007669"/>
    <property type="project" value="InterPro"/>
</dbReference>
<dbReference type="GO" id="GO:0008810">
    <property type="term" value="F:cellulase activity"/>
    <property type="evidence" value="ECO:0007669"/>
    <property type="project" value="UniProtKB-EC"/>
</dbReference>
<dbReference type="GO" id="GO:0030245">
    <property type="term" value="P:cellulose catabolic process"/>
    <property type="evidence" value="ECO:0007669"/>
    <property type="project" value="UniProtKB-KW"/>
</dbReference>
<dbReference type="FunFam" id="1.50.10.10:FF:000020">
    <property type="entry name" value="Endoglucanase"/>
    <property type="match status" value="1"/>
</dbReference>
<dbReference type="Gene3D" id="1.50.10.10">
    <property type="match status" value="1"/>
</dbReference>
<dbReference type="InterPro" id="IPR008928">
    <property type="entry name" value="6-hairpin_glycosidase_sf"/>
</dbReference>
<dbReference type="InterPro" id="IPR012341">
    <property type="entry name" value="6hp_glycosidase-like_sf"/>
</dbReference>
<dbReference type="InterPro" id="IPR019028">
    <property type="entry name" value="CBM_49"/>
</dbReference>
<dbReference type="InterPro" id="IPR001701">
    <property type="entry name" value="Glyco_hydro_9"/>
</dbReference>
<dbReference type="InterPro" id="IPR033126">
    <property type="entry name" value="Glyco_hydro_9_Asp/Glu_AS"/>
</dbReference>
<dbReference type="InterPro" id="IPR018221">
    <property type="entry name" value="Glyco_hydro_9_His_AS"/>
</dbReference>
<dbReference type="PANTHER" id="PTHR22298">
    <property type="entry name" value="ENDO-1,4-BETA-GLUCANASE"/>
    <property type="match status" value="1"/>
</dbReference>
<dbReference type="Pfam" id="PF09478">
    <property type="entry name" value="CBM49"/>
    <property type="match status" value="1"/>
</dbReference>
<dbReference type="Pfam" id="PF00759">
    <property type="entry name" value="Glyco_hydro_9"/>
    <property type="match status" value="1"/>
</dbReference>
<dbReference type="SMART" id="SM01063">
    <property type="entry name" value="CBM49"/>
    <property type="match status" value="1"/>
</dbReference>
<dbReference type="SUPFAM" id="SSF48208">
    <property type="entry name" value="Six-hairpin glycosidases"/>
    <property type="match status" value="1"/>
</dbReference>
<dbReference type="PROSITE" id="PS60032">
    <property type="entry name" value="GH9_1"/>
    <property type="match status" value="1"/>
</dbReference>
<dbReference type="PROSITE" id="PS00592">
    <property type="entry name" value="GH9_2"/>
    <property type="match status" value="1"/>
</dbReference>
<dbReference type="PROSITE" id="PS00698">
    <property type="entry name" value="GH9_3"/>
    <property type="match status" value="1"/>
</dbReference>
<feature type="signal peptide" evidence="2">
    <location>
        <begin position="1"/>
        <end position="34"/>
    </location>
</feature>
<feature type="chain" id="PRO_0000295017" description="Endoglucanase 13">
    <location>
        <begin position="35"/>
        <end position="625"/>
    </location>
</feature>
<feature type="region of interest" description="Disordered" evidence="6">
    <location>
        <begin position="509"/>
        <end position="530"/>
    </location>
</feature>
<feature type="active site" description="Nucleophile" evidence="5">
    <location>
        <position position="91"/>
    </location>
</feature>
<feature type="active site" evidence="3">
    <location>
        <position position="427"/>
    </location>
</feature>
<feature type="active site" evidence="4">
    <location>
        <position position="479"/>
    </location>
</feature>
<feature type="active site" evidence="4">
    <location>
        <position position="488"/>
    </location>
</feature>
<feature type="glycosylation site" description="N-linked (GlcNAc...) asparagine" evidence="2">
    <location>
        <position position="440"/>
    </location>
</feature>
<feature type="sequence conflict" description="In Ref. 2; EAY96028." evidence="7" ref="2">
    <original>D</original>
    <variation>H</variation>
    <location>
        <position position="230"/>
    </location>
</feature>
<name>GUN13_ORYSI</name>
<reference key="1">
    <citation type="journal article" date="2002" name="Nature">
        <title>Sequence and analysis of rice chromosome 4.</title>
        <authorList>
            <person name="Feng Q."/>
            <person name="Zhang Y."/>
            <person name="Hao P."/>
            <person name="Wang S."/>
            <person name="Fu G."/>
            <person name="Huang Y."/>
            <person name="Li Y."/>
            <person name="Zhu J."/>
            <person name="Liu Y."/>
            <person name="Hu X."/>
            <person name="Jia P."/>
            <person name="Zhang Y."/>
            <person name="Zhao Q."/>
            <person name="Ying K."/>
            <person name="Yu S."/>
            <person name="Tang Y."/>
            <person name="Weng Q."/>
            <person name="Zhang L."/>
            <person name="Lu Y."/>
            <person name="Mu J."/>
            <person name="Lu Y."/>
            <person name="Zhang L.S."/>
            <person name="Yu Z."/>
            <person name="Fan D."/>
            <person name="Liu X."/>
            <person name="Lu T."/>
            <person name="Li C."/>
            <person name="Wu Y."/>
            <person name="Sun T."/>
            <person name="Lei H."/>
            <person name="Li T."/>
            <person name="Hu H."/>
            <person name="Guan J."/>
            <person name="Wu M."/>
            <person name="Zhang R."/>
            <person name="Zhou B."/>
            <person name="Chen Z."/>
            <person name="Chen L."/>
            <person name="Jin Z."/>
            <person name="Wang R."/>
            <person name="Yin H."/>
            <person name="Cai Z."/>
            <person name="Ren S."/>
            <person name="Lv G."/>
            <person name="Gu W."/>
            <person name="Zhu G."/>
            <person name="Tu Y."/>
            <person name="Jia J."/>
            <person name="Zhang Y."/>
            <person name="Chen J."/>
            <person name="Kang H."/>
            <person name="Chen X."/>
            <person name="Shao C."/>
            <person name="Sun Y."/>
            <person name="Hu Q."/>
            <person name="Zhang X."/>
            <person name="Zhang W."/>
            <person name="Wang L."/>
            <person name="Ding C."/>
            <person name="Sheng H."/>
            <person name="Gu J."/>
            <person name="Chen S."/>
            <person name="Ni L."/>
            <person name="Zhu F."/>
            <person name="Chen W."/>
            <person name="Lan L."/>
            <person name="Lai Y."/>
            <person name="Cheng Z."/>
            <person name="Gu M."/>
            <person name="Jiang J."/>
            <person name="Li J."/>
            <person name="Hong G."/>
            <person name="Xue Y."/>
            <person name="Han B."/>
        </authorList>
    </citation>
    <scope>NUCLEOTIDE SEQUENCE [LARGE SCALE GENOMIC DNA]</scope>
    <source>
        <strain>cv. Guang-Lu-Ai No.4</strain>
    </source>
</reference>
<reference key="2">
    <citation type="journal article" date="2005" name="PLoS Biol.">
        <title>The genomes of Oryza sativa: a history of duplications.</title>
        <authorList>
            <person name="Yu J."/>
            <person name="Wang J."/>
            <person name="Lin W."/>
            <person name="Li S."/>
            <person name="Li H."/>
            <person name="Zhou J."/>
            <person name="Ni P."/>
            <person name="Dong W."/>
            <person name="Hu S."/>
            <person name="Zeng C."/>
            <person name="Zhang J."/>
            <person name="Zhang Y."/>
            <person name="Li R."/>
            <person name="Xu Z."/>
            <person name="Li S."/>
            <person name="Li X."/>
            <person name="Zheng H."/>
            <person name="Cong L."/>
            <person name="Lin L."/>
            <person name="Yin J."/>
            <person name="Geng J."/>
            <person name="Li G."/>
            <person name="Shi J."/>
            <person name="Liu J."/>
            <person name="Lv H."/>
            <person name="Li J."/>
            <person name="Wang J."/>
            <person name="Deng Y."/>
            <person name="Ran L."/>
            <person name="Shi X."/>
            <person name="Wang X."/>
            <person name="Wu Q."/>
            <person name="Li C."/>
            <person name="Ren X."/>
            <person name="Wang J."/>
            <person name="Wang X."/>
            <person name="Li D."/>
            <person name="Liu D."/>
            <person name="Zhang X."/>
            <person name="Ji Z."/>
            <person name="Zhao W."/>
            <person name="Sun Y."/>
            <person name="Zhang Z."/>
            <person name="Bao J."/>
            <person name="Han Y."/>
            <person name="Dong L."/>
            <person name="Ji J."/>
            <person name="Chen P."/>
            <person name="Wu S."/>
            <person name="Liu J."/>
            <person name="Xiao Y."/>
            <person name="Bu D."/>
            <person name="Tan J."/>
            <person name="Yang L."/>
            <person name="Ye C."/>
            <person name="Zhang J."/>
            <person name="Xu J."/>
            <person name="Zhou Y."/>
            <person name="Yu Y."/>
            <person name="Zhang B."/>
            <person name="Zhuang S."/>
            <person name="Wei H."/>
            <person name="Liu B."/>
            <person name="Lei M."/>
            <person name="Yu H."/>
            <person name="Li Y."/>
            <person name="Xu H."/>
            <person name="Wei S."/>
            <person name="He X."/>
            <person name="Fang L."/>
            <person name="Zhang Z."/>
            <person name="Zhang Y."/>
            <person name="Huang X."/>
            <person name="Su Z."/>
            <person name="Tong W."/>
            <person name="Li J."/>
            <person name="Tong Z."/>
            <person name="Li S."/>
            <person name="Ye J."/>
            <person name="Wang L."/>
            <person name="Fang L."/>
            <person name="Lei T."/>
            <person name="Chen C.-S."/>
            <person name="Chen H.-C."/>
            <person name="Xu Z."/>
            <person name="Li H."/>
            <person name="Huang H."/>
            <person name="Zhang F."/>
            <person name="Xu H."/>
            <person name="Li N."/>
            <person name="Zhao C."/>
            <person name="Li S."/>
            <person name="Dong L."/>
            <person name="Huang Y."/>
            <person name="Li L."/>
            <person name="Xi Y."/>
            <person name="Qi Q."/>
            <person name="Li W."/>
            <person name="Zhang B."/>
            <person name="Hu W."/>
            <person name="Zhang Y."/>
            <person name="Tian X."/>
            <person name="Jiao Y."/>
            <person name="Liang X."/>
            <person name="Jin J."/>
            <person name="Gao L."/>
            <person name="Zheng W."/>
            <person name="Hao B."/>
            <person name="Liu S.-M."/>
            <person name="Wang W."/>
            <person name="Yuan L."/>
            <person name="Cao M."/>
            <person name="McDermott J."/>
            <person name="Samudrala R."/>
            <person name="Wang J."/>
            <person name="Wong G.K.-S."/>
            <person name="Yang H."/>
        </authorList>
    </citation>
    <scope>NUCLEOTIDE SEQUENCE [LARGE SCALE GENOMIC DNA]</scope>
    <source>
        <strain>cv. 93-11</strain>
    </source>
</reference>
<evidence type="ECO:0000250" key="1"/>
<evidence type="ECO:0000255" key="2"/>
<evidence type="ECO:0000255" key="3">
    <source>
        <dbReference type="PROSITE-ProRule" id="PRU10059"/>
    </source>
</evidence>
<evidence type="ECO:0000255" key="4">
    <source>
        <dbReference type="PROSITE-ProRule" id="PRU10060"/>
    </source>
</evidence>
<evidence type="ECO:0000255" key="5">
    <source>
        <dbReference type="PROSITE-ProRule" id="PRU10140"/>
    </source>
</evidence>
<evidence type="ECO:0000256" key="6">
    <source>
        <dbReference type="SAM" id="MobiDB-lite"/>
    </source>
</evidence>
<evidence type="ECO:0000305" key="7"/>
<keyword id="KW-0119">Carbohydrate metabolism</keyword>
<keyword id="KW-0136">Cellulose degradation</keyword>
<keyword id="KW-0325">Glycoprotein</keyword>
<keyword id="KW-0326">Glycosidase</keyword>
<keyword id="KW-0378">Hydrolase</keyword>
<keyword id="KW-0624">Polysaccharide degradation</keyword>
<keyword id="KW-1185">Reference proteome</keyword>
<keyword id="KW-0964">Secreted</keyword>
<keyword id="KW-0732">Signal</keyword>
<sequence length="625" mass="68381">MAATMNKTPATTFLLIPAAASLVLLLAAAASVEASAFDYAGAFDKCLLFFEAQRSGKLPDDRLVRWRGDSALTDGFSQGVDLVGGYYDSGDHVKFGLPMAYAVTMLSWGVVEFEKEMVDGNKLHRVLDAIRWGTNYFVKAHTQHNALWVQVGDGDSDHLCWERAEDMSTPRTAFKIDINNPGSEVAGETAAALAAAAKAFKPYDRMYSDLLLLHSKQLFTFADTFRGKYDDSLQSAKKFYPSASGYQDELLWAAAWLYEATGDEQYLRYVSQNAEAFGGTGWAVTEFSWDNKYAGLQVLLSKVLFEQGGSAAGYADTLKQYQAKAEFFLCACLQKNNGHNVKMTPGGLMYVSDWSNMQYVSSSAFLLTVYADYLAESRGTLRCPDGEVKPAEILLFARSQVDYVLGKNPKGMSYMVGYGSYYPTHVHHRGASIPSIYAMNATVGCMEGFDKYYNSKNADPNVLHGALVGGPDANDAYDDDRCNYQHAEPTLAGNAPMSGVFARLAASPADNTPEYTPAPNAPSPSNGGSPLEFVHTVTNTWKANGVDYYRHVVTAKNTCGHAITYLKLQIKELSGEIYGVSRTNAKDMYEFPSWMTRLDAGAQLTIVYIQGGPAAKIAVVEYKTA</sequence>
<protein>
    <recommendedName>
        <fullName>Endoglucanase 13</fullName>
        <ecNumber>3.2.1.4</ecNumber>
    </recommendedName>
    <alternativeName>
        <fullName>Endo-1,4-beta glucanase 13</fullName>
    </alternativeName>
    <alternativeName>
        <fullName>OsGLU6</fullName>
    </alternativeName>
</protein>
<organism>
    <name type="scientific">Oryza sativa subsp. indica</name>
    <name type="common">Rice</name>
    <dbReference type="NCBI Taxonomy" id="39946"/>
    <lineage>
        <taxon>Eukaryota</taxon>
        <taxon>Viridiplantae</taxon>
        <taxon>Streptophyta</taxon>
        <taxon>Embryophyta</taxon>
        <taxon>Tracheophyta</taxon>
        <taxon>Spermatophyta</taxon>
        <taxon>Magnoliopsida</taxon>
        <taxon>Liliopsida</taxon>
        <taxon>Poales</taxon>
        <taxon>Poaceae</taxon>
        <taxon>BOP clade</taxon>
        <taxon>Oryzoideae</taxon>
        <taxon>Oryzeae</taxon>
        <taxon>Oryzinae</taxon>
        <taxon>Oryza</taxon>
        <taxon>Oryza sativa</taxon>
    </lineage>
</organism>
<proteinExistence type="inferred from homology"/>
<accession>A2XYW8</accession>
<accession>Q259H9</accession>
<accession>Q7XQ92</accession>
<gene>
    <name type="primary">GLU6</name>
    <name type="ORF">H0103C06.3</name>
    <name type="ORF">H0403D02.19</name>
    <name type="ORF">OsI_017261</name>
</gene>
<comment type="catalytic activity">
    <reaction>
        <text>Endohydrolysis of (1-&gt;4)-beta-D-glucosidic linkages in cellulose, lichenin and cereal beta-D-glucans.</text>
        <dbReference type="EC" id="3.2.1.4"/>
    </reaction>
</comment>
<comment type="subcellular location">
    <subcellularLocation>
        <location evidence="1">Secreted</location>
    </subcellularLocation>
</comment>
<comment type="similarity">
    <text evidence="5 7">Belongs to the glycosyl hydrolase 9 (cellulase E) family.</text>
</comment>